<name>PAN2_ASPTN</name>
<dbReference type="EC" id="3.1.13.4" evidence="2"/>
<dbReference type="EMBL" id="CH476601">
    <property type="protein sequence ID" value="EAU33798.1"/>
    <property type="molecule type" value="Genomic_DNA"/>
</dbReference>
<dbReference type="RefSeq" id="XP_001215215.1">
    <property type="nucleotide sequence ID" value="XM_001215215.1"/>
</dbReference>
<dbReference type="SMR" id="Q0CJU7"/>
<dbReference type="STRING" id="341663.Q0CJU7"/>
<dbReference type="EnsemblFungi" id="EAU33798">
    <property type="protein sequence ID" value="EAU33798"/>
    <property type="gene ID" value="ATEG_06037"/>
</dbReference>
<dbReference type="GeneID" id="4321441"/>
<dbReference type="VEuPathDB" id="FungiDB:ATEG_06037"/>
<dbReference type="eggNOG" id="KOG1275">
    <property type="taxonomic scope" value="Eukaryota"/>
</dbReference>
<dbReference type="HOGENOM" id="CLU_002369_1_0_1"/>
<dbReference type="OMA" id="TQELLWT"/>
<dbReference type="OrthoDB" id="16516at2759"/>
<dbReference type="Proteomes" id="UP000007963">
    <property type="component" value="Unassembled WGS sequence"/>
</dbReference>
<dbReference type="GO" id="GO:0000932">
    <property type="term" value="C:P-body"/>
    <property type="evidence" value="ECO:0007669"/>
    <property type="project" value="TreeGrafter"/>
</dbReference>
<dbReference type="GO" id="GO:0031251">
    <property type="term" value="C:PAN complex"/>
    <property type="evidence" value="ECO:0007669"/>
    <property type="project" value="UniProtKB-UniRule"/>
</dbReference>
<dbReference type="GO" id="GO:0046872">
    <property type="term" value="F:metal ion binding"/>
    <property type="evidence" value="ECO:0007669"/>
    <property type="project" value="UniProtKB-KW"/>
</dbReference>
<dbReference type="GO" id="GO:0003676">
    <property type="term" value="F:nucleic acid binding"/>
    <property type="evidence" value="ECO:0007669"/>
    <property type="project" value="InterPro"/>
</dbReference>
<dbReference type="GO" id="GO:0004535">
    <property type="term" value="F:poly(A)-specific ribonuclease activity"/>
    <property type="evidence" value="ECO:0007669"/>
    <property type="project" value="UniProtKB-UniRule"/>
</dbReference>
<dbReference type="GO" id="GO:0006397">
    <property type="term" value="P:mRNA processing"/>
    <property type="evidence" value="ECO:0007669"/>
    <property type="project" value="UniProtKB-KW"/>
</dbReference>
<dbReference type="GO" id="GO:0000289">
    <property type="term" value="P:nuclear-transcribed mRNA poly(A) tail shortening"/>
    <property type="evidence" value="ECO:0007669"/>
    <property type="project" value="UniProtKB-UniRule"/>
</dbReference>
<dbReference type="CDD" id="cd06143">
    <property type="entry name" value="PAN2_exo"/>
    <property type="match status" value="1"/>
</dbReference>
<dbReference type="FunFam" id="2.130.10.10:FF:000459">
    <property type="entry name" value="PAN2-PAN3 deadenylation complex catalytic subunit PAN2"/>
    <property type="match status" value="1"/>
</dbReference>
<dbReference type="FunFam" id="3.30.420.10:FF:000028">
    <property type="entry name" value="PAN2-PAN3 deadenylation complex catalytic subunit PAN2"/>
    <property type="match status" value="1"/>
</dbReference>
<dbReference type="FunFam" id="3.90.70.10:FF:000135">
    <property type="entry name" value="PAN2-PAN3 deadenylation complex catalytic subunit pan2"/>
    <property type="match status" value="1"/>
</dbReference>
<dbReference type="Gene3D" id="3.90.70.10">
    <property type="entry name" value="Cysteine proteinases"/>
    <property type="match status" value="1"/>
</dbReference>
<dbReference type="Gene3D" id="3.30.420.10">
    <property type="entry name" value="Ribonuclease H-like superfamily/Ribonuclease H"/>
    <property type="match status" value="1"/>
</dbReference>
<dbReference type="Gene3D" id="2.130.10.10">
    <property type="entry name" value="YVTN repeat-like/Quinoprotein amine dehydrogenase"/>
    <property type="match status" value="1"/>
</dbReference>
<dbReference type="HAMAP" id="MF_03182">
    <property type="entry name" value="PAN2"/>
    <property type="match status" value="1"/>
</dbReference>
<dbReference type="InterPro" id="IPR013520">
    <property type="entry name" value="Exonuclease_RNaseT/DNA_pol3"/>
</dbReference>
<dbReference type="InterPro" id="IPR030843">
    <property type="entry name" value="PAN2"/>
</dbReference>
<dbReference type="InterPro" id="IPR050785">
    <property type="entry name" value="PAN2-PAN3_catalytic_subunit"/>
</dbReference>
<dbReference type="InterPro" id="IPR048841">
    <property type="entry name" value="PAN2_N"/>
</dbReference>
<dbReference type="InterPro" id="IPR028881">
    <property type="entry name" value="PAN2_UCH_dom"/>
</dbReference>
<dbReference type="InterPro" id="IPR038765">
    <property type="entry name" value="Papain-like_cys_pep_sf"/>
</dbReference>
<dbReference type="InterPro" id="IPR012337">
    <property type="entry name" value="RNaseH-like_sf"/>
</dbReference>
<dbReference type="InterPro" id="IPR036397">
    <property type="entry name" value="RNaseH_sf"/>
</dbReference>
<dbReference type="InterPro" id="IPR028889">
    <property type="entry name" value="USP_dom"/>
</dbReference>
<dbReference type="InterPro" id="IPR015943">
    <property type="entry name" value="WD40/YVTN_repeat-like_dom_sf"/>
</dbReference>
<dbReference type="InterPro" id="IPR036322">
    <property type="entry name" value="WD40_repeat_dom_sf"/>
</dbReference>
<dbReference type="PANTHER" id="PTHR15728">
    <property type="entry name" value="DEADENYLATION COMPLEX CATALYTIC SUBUNIT PAN2"/>
    <property type="match status" value="1"/>
</dbReference>
<dbReference type="PANTHER" id="PTHR15728:SF0">
    <property type="entry name" value="PAN2-PAN3 DEADENYLATION COMPLEX CATALYTIC SUBUNIT PAN2"/>
    <property type="match status" value="1"/>
</dbReference>
<dbReference type="Pfam" id="PF20770">
    <property type="entry name" value="PAN2_N"/>
    <property type="match status" value="1"/>
</dbReference>
<dbReference type="Pfam" id="PF00929">
    <property type="entry name" value="RNase_T"/>
    <property type="match status" value="1"/>
</dbReference>
<dbReference type="Pfam" id="PF13423">
    <property type="entry name" value="UCH_1"/>
    <property type="match status" value="1"/>
</dbReference>
<dbReference type="SMART" id="SM00479">
    <property type="entry name" value="EXOIII"/>
    <property type="match status" value="1"/>
</dbReference>
<dbReference type="SUPFAM" id="SSF54001">
    <property type="entry name" value="Cysteine proteinases"/>
    <property type="match status" value="1"/>
</dbReference>
<dbReference type="SUPFAM" id="SSF53098">
    <property type="entry name" value="Ribonuclease H-like"/>
    <property type="match status" value="1"/>
</dbReference>
<dbReference type="SUPFAM" id="SSF50978">
    <property type="entry name" value="WD40 repeat-like"/>
    <property type="match status" value="1"/>
</dbReference>
<dbReference type="PROSITE" id="PS50235">
    <property type="entry name" value="USP_3"/>
    <property type="match status" value="1"/>
</dbReference>
<proteinExistence type="inferred from homology"/>
<protein>
    <recommendedName>
        <fullName evidence="2">PAN2-PAN3 deadenylation complex catalytic subunit pan2</fullName>
        <ecNumber evidence="2">3.1.13.4</ecNumber>
    </recommendedName>
    <alternativeName>
        <fullName evidence="2">PAB1P-dependent poly(A)-specific ribonuclease</fullName>
    </alternativeName>
    <alternativeName>
        <fullName evidence="2">Poly(A)-nuclease deadenylation complex subunit 2</fullName>
        <shortName evidence="2">PAN deadenylation complex subunit 2</shortName>
    </alternativeName>
</protein>
<evidence type="ECO:0000250" key="1"/>
<evidence type="ECO:0000255" key="2">
    <source>
        <dbReference type="HAMAP-Rule" id="MF_03182"/>
    </source>
</evidence>
<evidence type="ECO:0000256" key="3">
    <source>
        <dbReference type="SAM" id="MobiDB-lite"/>
    </source>
</evidence>
<organism>
    <name type="scientific">Aspergillus terreus (strain NIH 2624 / FGSC A1156)</name>
    <dbReference type="NCBI Taxonomy" id="341663"/>
    <lineage>
        <taxon>Eukaryota</taxon>
        <taxon>Fungi</taxon>
        <taxon>Dikarya</taxon>
        <taxon>Ascomycota</taxon>
        <taxon>Pezizomycotina</taxon>
        <taxon>Eurotiomycetes</taxon>
        <taxon>Eurotiomycetidae</taxon>
        <taxon>Eurotiales</taxon>
        <taxon>Aspergillaceae</taxon>
        <taxon>Aspergillus</taxon>
        <taxon>Aspergillus subgen. Circumdati</taxon>
    </lineage>
</organism>
<feature type="chain" id="PRO_0000295339" description="PAN2-PAN3 deadenylation complex catalytic subunit pan2">
    <location>
        <begin position="1"/>
        <end position="1159"/>
    </location>
</feature>
<feature type="repeat" description="WD" evidence="2">
    <location>
        <begin position="276"/>
        <end position="315"/>
    </location>
</feature>
<feature type="domain" description="USP" evidence="2">
    <location>
        <begin position="452"/>
        <end position="821"/>
    </location>
</feature>
<feature type="domain" description="Exonuclease" evidence="2">
    <location>
        <begin position="872"/>
        <end position="1048"/>
    </location>
</feature>
<feature type="region of interest" description="Linker" evidence="2">
    <location>
        <begin position="316"/>
        <end position="451"/>
    </location>
</feature>
<feature type="region of interest" description="Disordered" evidence="3">
    <location>
        <begin position="1094"/>
        <end position="1159"/>
    </location>
</feature>
<feature type="compositionally biased region" description="Polar residues" evidence="3">
    <location>
        <begin position="1096"/>
        <end position="1106"/>
    </location>
</feature>
<feature type="compositionally biased region" description="Low complexity" evidence="3">
    <location>
        <begin position="1107"/>
        <end position="1128"/>
    </location>
</feature>
<feature type="compositionally biased region" description="Gly residues" evidence="3">
    <location>
        <begin position="1143"/>
        <end position="1153"/>
    </location>
</feature>
<feature type="binding site" evidence="2">
    <location>
        <position position="873"/>
    </location>
    <ligand>
        <name>a divalent metal cation</name>
        <dbReference type="ChEBI" id="CHEBI:60240"/>
        <note>catalytic</note>
    </ligand>
</feature>
<feature type="binding site" evidence="2">
    <location>
        <position position="875"/>
    </location>
    <ligand>
        <name>a divalent metal cation</name>
        <dbReference type="ChEBI" id="CHEBI:60240"/>
        <note>catalytic</note>
    </ligand>
</feature>
<feature type="binding site" evidence="2">
    <location>
        <position position="982"/>
    </location>
    <ligand>
        <name>a divalent metal cation</name>
        <dbReference type="ChEBI" id="CHEBI:60240"/>
        <note>catalytic</note>
    </ligand>
</feature>
<feature type="binding site" evidence="2">
    <location>
        <position position="1041"/>
    </location>
    <ligand>
        <name>a divalent metal cation</name>
        <dbReference type="ChEBI" id="CHEBI:60240"/>
        <note>catalytic</note>
    </ligand>
</feature>
<sequence length="1159" mass="129007">MEADWDELSRIPVPPPSPHALPTVATTIAFDDVMELLWVGNEYGRITSFYGPELQRYTSVRAHPVAEGIVRQILFHERGVISLSSRSVHMITRRGLTQWHVAHEEMVDLRCMSFTAQLNRVIVAGCQKVMFTIDIDKGVIVDKLPTEYNYTMMKKSRYLCAATDTGSVNALSLSDFRVVKSWKAHGTAVNDMDARNDLLVTCGFSVRHLGSPIVDPLANVYDLKTLSPLPPIPFHAGAAYVRMHPKLSTTSFVASQTGQLQVVDLMNPNSINLRQANVSFMLGIDISPSGEALAINDAECMVHLWGSPAKIHFNEMSKEVELADVTHRPPPLDWSPDTPLNMIGMPYYHERLFSAWPSHLVFEVGSPPAPIDTGLIPYLRPAEIGHCAPNPKKTRRYQVENTRAVATTEPALIAPKFLSEKAREQSKKSDGSVAEAAGALAGAKLNGEAEDDPLLKYSNVEIKYSRFGVDDFDFRFYNQTNFSGLETHIANSFTNALLQLLKFIPLVRNVALHHAASSCVFENCLLCEMGYLFDMLEKANGQNCQATNLLKTFSSFREAASLGILEENLTNKSLSSAIQAVNRFFLGQIAHDFRTIMPNSDDLEQRLATIASESIQCRYCGNEIVRPGNSLVNELIYPNMDIKHTRRNPAFRFSNILRASIERETQNKGWCNYCRRYQPVGIRKSVHRMPLVMMLNAALNTPMARRLWAIPGWLPDEVGIVIDGGQTLCYEGEDLRMRVQANMPGLIVYELVGVVTEIDIPEHQKPHLVSFINVAISSPEPQPQNKWHLFNDFLVTEVDKDEALRFNQPWKVPCVLAFQVKDARHAMDDSWKDALDTTLLFRDWSLNGGRPVESRVTLSEDEKPTPGTPMALDTEFVDLEKAEIDVKADGSQEIVRPSKSGLARVSVLRGSGVREGVPFIDDYITIKEPIVDYVTQYSGIKPGDLDPRTSEHNLVPLKVAYKKLWLLLNLGCVFVGHGLASDFRKINIQVPKSQTVDTQYLFFHPGKSRRLSLRYLAWAVFKEYIQEEPADNNEGHDSIEDARMALRLWKKFLEYEDAGIVSQMLEEIFREGSKLGFRPPPRNGTAAVLSRPGTAVTMQNTNSGRNTPTVPDAAGAPAVPASAPTTPGRGFRRADALTPGDGTFSGPGAGDFFGGSPLK</sequence>
<comment type="function">
    <text evidence="2">Catalytic subunit of the poly(A)-nuclease (PAN) deadenylation complex, one of two cytoplasmic mRNA deadenylases involved in mRNA turnover. PAN specifically shortens poly(A) tails of RNA and the activity is stimulated by poly(A)-binding protein pab1. PAN deadenylation is followed by rapid degradation of the shortened mRNA tails by the CCR4-NOT complex. Deadenylated mRNAs are then degraded by two alternative mechanisms, namely exosome-mediated 3'-5' exonucleolytic degradation, or deadenylation-dependent mRNA decaping and subsequent 5'-3' exonucleolytic degradation by xrn1. May also be involved in post-transcriptional maturation of mRNA poly(A) tails.</text>
</comment>
<comment type="catalytic activity">
    <reaction evidence="2">
        <text>Exonucleolytic cleavage of poly(A) to 5'-AMP.</text>
        <dbReference type="EC" id="3.1.13.4"/>
    </reaction>
</comment>
<comment type="cofactor">
    <cofactor evidence="2">
        <name>a divalent metal cation</name>
        <dbReference type="ChEBI" id="CHEBI:60240"/>
    </cofactor>
    <text evidence="2">Binds 2 metal cations per subunit in the catalytic exonuclease domain.</text>
</comment>
<comment type="activity regulation">
    <text evidence="1 2">Positively regulated by the regulatory subunit pan3.</text>
</comment>
<comment type="subunit">
    <text evidence="2">Forms a heterotrimer with an asymmetric homodimer of the regulatory subunit pan3 to form the poly(A)-nuclease (PAN) deadenylation complex.</text>
</comment>
<comment type="subcellular location">
    <subcellularLocation>
        <location evidence="2">Cytoplasm</location>
    </subcellularLocation>
</comment>
<comment type="domain">
    <text evidence="2">Contains a pseudo-UCH domain. This ubiquitin C-terminal hydrolase (UCH)-like or ubiquitin specific protease (USP)-like domain is predicted to be catalytically inactive because it lacks the active site catalytic triad characteristic of thiol proteases, with residues at the equivalent structural positions that are incompatible with catalysis, and it cannot bind ubiquitin. It functions as a structural scaffold for intra- and intermolecular interactions in the complex.</text>
</comment>
<comment type="domain">
    <text evidence="2">The linker, or PAN3 interaction domain (PID), between the WD40 repeats and the pseudo-UCH domain mediates interaction with pan3.</text>
</comment>
<comment type="similarity">
    <text evidence="2">Belongs to the peptidase C19 family. PAN2 subfamily.</text>
</comment>
<reference key="1">
    <citation type="submission" date="2005-09" db="EMBL/GenBank/DDBJ databases">
        <title>Annotation of the Aspergillus terreus NIH2624 genome.</title>
        <authorList>
            <person name="Birren B.W."/>
            <person name="Lander E.S."/>
            <person name="Galagan J.E."/>
            <person name="Nusbaum C."/>
            <person name="Devon K."/>
            <person name="Henn M."/>
            <person name="Ma L.-J."/>
            <person name="Jaffe D.B."/>
            <person name="Butler J."/>
            <person name="Alvarez P."/>
            <person name="Gnerre S."/>
            <person name="Grabherr M."/>
            <person name="Kleber M."/>
            <person name="Mauceli E.W."/>
            <person name="Brockman W."/>
            <person name="Rounsley S."/>
            <person name="Young S.K."/>
            <person name="LaButti K."/>
            <person name="Pushparaj V."/>
            <person name="DeCaprio D."/>
            <person name="Crawford M."/>
            <person name="Koehrsen M."/>
            <person name="Engels R."/>
            <person name="Montgomery P."/>
            <person name="Pearson M."/>
            <person name="Howarth C."/>
            <person name="Larson L."/>
            <person name="Luoma S."/>
            <person name="White J."/>
            <person name="Alvarado L."/>
            <person name="Kodira C.D."/>
            <person name="Zeng Q."/>
            <person name="Oleary S."/>
            <person name="Yandava C."/>
            <person name="Denning D.W."/>
            <person name="Nierman W.C."/>
            <person name="Milne T."/>
            <person name="Madden K."/>
        </authorList>
    </citation>
    <scope>NUCLEOTIDE SEQUENCE [LARGE SCALE GENOMIC DNA]</scope>
    <source>
        <strain>NIH 2624 / FGSC A1156</strain>
    </source>
</reference>
<accession>Q0CJU7</accession>
<gene>
    <name evidence="2" type="primary">pan2</name>
    <name type="ORF">ATEG_06037</name>
</gene>
<keyword id="KW-0963">Cytoplasm</keyword>
<keyword id="KW-0269">Exonuclease</keyword>
<keyword id="KW-0378">Hydrolase</keyword>
<keyword id="KW-0479">Metal-binding</keyword>
<keyword id="KW-0507">mRNA processing</keyword>
<keyword id="KW-0540">Nuclease</keyword>
<keyword id="KW-1185">Reference proteome</keyword>
<keyword id="KW-0853">WD repeat</keyword>